<sequence length="179" mass="20154">MHNDLKEVLLTEEDIQNICKELGAQLTKDYQGKPLVCVGILKGSAMFMSDLIKRIDTHLSIDFMDVSSYHGGTESTGEVQIIKDLGSSIENKDVLIIEDILETGTTLKSITELLQSRKVNSLEIVTLLDKPNRRKADIEAKYVGKKIPDEFVVGYGLDYRELYRNLPYIGTLKPEVYSN</sequence>
<feature type="chain" id="PRO_0000139615" description="Hypoxanthine-guanine phosphoribosyltransferase">
    <location>
        <begin position="1"/>
        <end position="179"/>
    </location>
</feature>
<feature type="active site" description="Proton acceptor" evidence="2">
    <location>
        <position position="102"/>
    </location>
</feature>
<feature type="binding site" evidence="3">
    <location>
        <position position="42"/>
    </location>
    <ligand>
        <name>diphosphate</name>
        <dbReference type="ChEBI" id="CHEBI:33019"/>
    </ligand>
</feature>
<feature type="binding site" evidence="3">
    <location>
        <position position="43"/>
    </location>
    <ligand>
        <name>diphosphate</name>
        <dbReference type="ChEBI" id="CHEBI:33019"/>
    </ligand>
</feature>
<feature type="binding site" evidence="3">
    <location>
        <position position="98"/>
    </location>
    <ligand>
        <name>Mg(2+)</name>
        <dbReference type="ChEBI" id="CHEBI:18420"/>
    </ligand>
</feature>
<feature type="binding site" evidence="3">
    <location>
        <position position="99"/>
    </location>
    <ligand>
        <name>Mg(2+)</name>
        <dbReference type="ChEBI" id="CHEBI:18420"/>
    </ligand>
</feature>
<feature type="binding site" evidence="3">
    <location>
        <position position="130"/>
    </location>
    <ligand>
        <name>GMP</name>
        <dbReference type="ChEBI" id="CHEBI:58115"/>
    </ligand>
</feature>
<feature type="binding site" evidence="3">
    <location>
        <begin position="151"/>
        <end position="152"/>
    </location>
    <ligand>
        <name>GMP</name>
        <dbReference type="ChEBI" id="CHEBI:58115"/>
    </ligand>
</feature>
<feature type="binding site" evidence="3">
    <location>
        <position position="158"/>
    </location>
    <ligand>
        <name>GMP</name>
        <dbReference type="ChEBI" id="CHEBI:58115"/>
    </ligand>
</feature>
<feature type="binding site" evidence="3">
    <location>
        <position position="164"/>
    </location>
    <ligand>
        <name>diphosphate</name>
        <dbReference type="ChEBI" id="CHEBI:33019"/>
    </ligand>
</feature>
<reference key="1">
    <citation type="journal article" date="2004" name="Proc. Natl. Acad. Sci. U.S.A.">
        <title>Complete genomes of two clinical Staphylococcus aureus strains: evidence for the rapid evolution of virulence and drug resistance.</title>
        <authorList>
            <person name="Holden M.T.G."/>
            <person name="Feil E.J."/>
            <person name="Lindsay J.A."/>
            <person name="Peacock S.J."/>
            <person name="Day N.P.J."/>
            <person name="Enright M.C."/>
            <person name="Foster T.J."/>
            <person name="Moore C.E."/>
            <person name="Hurst L."/>
            <person name="Atkin R."/>
            <person name="Barron A."/>
            <person name="Bason N."/>
            <person name="Bentley S.D."/>
            <person name="Chillingworth C."/>
            <person name="Chillingworth T."/>
            <person name="Churcher C."/>
            <person name="Clark L."/>
            <person name="Corton C."/>
            <person name="Cronin A."/>
            <person name="Doggett J."/>
            <person name="Dowd L."/>
            <person name="Feltwell T."/>
            <person name="Hance Z."/>
            <person name="Harris B."/>
            <person name="Hauser H."/>
            <person name="Holroyd S."/>
            <person name="Jagels K."/>
            <person name="James K.D."/>
            <person name="Lennard N."/>
            <person name="Line A."/>
            <person name="Mayes R."/>
            <person name="Moule S."/>
            <person name="Mungall K."/>
            <person name="Ormond D."/>
            <person name="Quail M.A."/>
            <person name="Rabbinowitsch E."/>
            <person name="Rutherford K.M."/>
            <person name="Sanders M."/>
            <person name="Sharp S."/>
            <person name="Simmonds M."/>
            <person name="Stevens K."/>
            <person name="Whitehead S."/>
            <person name="Barrell B.G."/>
            <person name="Spratt B.G."/>
            <person name="Parkhill J."/>
        </authorList>
    </citation>
    <scope>NUCLEOTIDE SEQUENCE [LARGE SCALE GENOMIC DNA]</scope>
    <source>
        <strain>MRSA252</strain>
    </source>
</reference>
<gene>
    <name type="primary">hpt</name>
    <name type="ordered locus">SAR0511</name>
</gene>
<protein>
    <recommendedName>
        <fullName>Hypoxanthine-guanine phosphoribosyltransferase</fullName>
        <shortName>HGPRT</shortName>
        <shortName>HGPRTase</shortName>
        <ecNumber evidence="3">2.4.2.8</ecNumber>
    </recommendedName>
</protein>
<name>HGPRT_STAAR</name>
<proteinExistence type="inferred from homology"/>
<comment type="function">
    <text evidence="3">Purine salvage pathway enzyme that catalyzes the transfer of the ribosyl-5-phosphate group from 5-phospho-alpha-D-ribose 1-diphosphate (PRPP) to the N9 position of the 6-oxopurines hypoxanthine and guanine to form the corresponding ribonucleotides IMP (inosine 5'-monophosphate) and GMP (guanosine 5'-monophosphate), with the release of PPi.</text>
</comment>
<comment type="catalytic activity">
    <reaction evidence="3">
        <text>IMP + diphosphate = hypoxanthine + 5-phospho-alpha-D-ribose 1-diphosphate</text>
        <dbReference type="Rhea" id="RHEA:17973"/>
        <dbReference type="ChEBI" id="CHEBI:17368"/>
        <dbReference type="ChEBI" id="CHEBI:33019"/>
        <dbReference type="ChEBI" id="CHEBI:58017"/>
        <dbReference type="ChEBI" id="CHEBI:58053"/>
        <dbReference type="EC" id="2.4.2.8"/>
    </reaction>
    <physiologicalReaction direction="right-to-left" evidence="3">
        <dbReference type="Rhea" id="RHEA:17975"/>
    </physiologicalReaction>
</comment>
<comment type="catalytic activity">
    <reaction evidence="3">
        <text>GMP + diphosphate = guanine + 5-phospho-alpha-D-ribose 1-diphosphate</text>
        <dbReference type="Rhea" id="RHEA:25424"/>
        <dbReference type="ChEBI" id="CHEBI:16235"/>
        <dbReference type="ChEBI" id="CHEBI:33019"/>
        <dbReference type="ChEBI" id="CHEBI:58017"/>
        <dbReference type="ChEBI" id="CHEBI:58115"/>
        <dbReference type="EC" id="2.4.2.8"/>
    </reaction>
    <physiologicalReaction direction="right-to-left" evidence="3">
        <dbReference type="Rhea" id="RHEA:25426"/>
    </physiologicalReaction>
</comment>
<comment type="cofactor">
    <cofactor evidence="3">
        <name>Mg(2+)</name>
        <dbReference type="ChEBI" id="CHEBI:18420"/>
    </cofactor>
</comment>
<comment type="pathway">
    <text evidence="3">Purine metabolism; IMP biosynthesis via salvage pathway; IMP from hypoxanthine: step 1/1.</text>
</comment>
<comment type="pathway">
    <text evidence="3">Purine metabolism; GMP biosynthesis via salvage pathway; GMP from guanine: step 1/1.</text>
</comment>
<comment type="subcellular location">
    <subcellularLocation>
        <location evidence="1">Cytoplasm</location>
    </subcellularLocation>
</comment>
<comment type="similarity">
    <text evidence="4">Belongs to the purine/pyrimidine phosphoribosyltransferase family.</text>
</comment>
<organism>
    <name type="scientific">Staphylococcus aureus (strain MRSA252)</name>
    <dbReference type="NCBI Taxonomy" id="282458"/>
    <lineage>
        <taxon>Bacteria</taxon>
        <taxon>Bacillati</taxon>
        <taxon>Bacillota</taxon>
        <taxon>Bacilli</taxon>
        <taxon>Bacillales</taxon>
        <taxon>Staphylococcaceae</taxon>
        <taxon>Staphylococcus</taxon>
    </lineage>
</organism>
<keyword id="KW-0963">Cytoplasm</keyword>
<keyword id="KW-0328">Glycosyltransferase</keyword>
<keyword id="KW-0460">Magnesium</keyword>
<keyword id="KW-0479">Metal-binding</keyword>
<keyword id="KW-0547">Nucleotide-binding</keyword>
<keyword id="KW-0660">Purine salvage</keyword>
<keyword id="KW-0808">Transferase</keyword>
<evidence type="ECO:0000250" key="1"/>
<evidence type="ECO:0000250" key="2">
    <source>
        <dbReference type="UniProtKB" id="P0A9M2"/>
    </source>
</evidence>
<evidence type="ECO:0000250" key="3">
    <source>
        <dbReference type="UniProtKB" id="P9WHQ9"/>
    </source>
</evidence>
<evidence type="ECO:0000305" key="4"/>
<accession>Q6GJG1</accession>
<dbReference type="EC" id="2.4.2.8" evidence="3"/>
<dbReference type="EMBL" id="BX571856">
    <property type="protein sequence ID" value="CAG39533.1"/>
    <property type="molecule type" value="Genomic_DNA"/>
</dbReference>
<dbReference type="RefSeq" id="WP_000551283.1">
    <property type="nucleotide sequence ID" value="NC_002952.2"/>
</dbReference>
<dbReference type="SMR" id="Q6GJG1"/>
<dbReference type="KEGG" id="sar:SAR0511"/>
<dbReference type="HOGENOM" id="CLU_073615_0_0_9"/>
<dbReference type="UniPathway" id="UPA00591">
    <property type="reaction ID" value="UER00648"/>
</dbReference>
<dbReference type="UniPathway" id="UPA00909">
    <property type="reaction ID" value="UER00887"/>
</dbReference>
<dbReference type="Proteomes" id="UP000000596">
    <property type="component" value="Chromosome"/>
</dbReference>
<dbReference type="GO" id="GO:0005829">
    <property type="term" value="C:cytosol"/>
    <property type="evidence" value="ECO:0007669"/>
    <property type="project" value="TreeGrafter"/>
</dbReference>
<dbReference type="GO" id="GO:0052657">
    <property type="term" value="F:guanine phosphoribosyltransferase activity"/>
    <property type="evidence" value="ECO:0007669"/>
    <property type="project" value="RHEA"/>
</dbReference>
<dbReference type="GO" id="GO:0004422">
    <property type="term" value="F:hypoxanthine phosphoribosyltransferase activity"/>
    <property type="evidence" value="ECO:0007669"/>
    <property type="project" value="InterPro"/>
</dbReference>
<dbReference type="GO" id="GO:0000287">
    <property type="term" value="F:magnesium ion binding"/>
    <property type="evidence" value="ECO:0007669"/>
    <property type="project" value="TreeGrafter"/>
</dbReference>
<dbReference type="GO" id="GO:0000166">
    <property type="term" value="F:nucleotide binding"/>
    <property type="evidence" value="ECO:0007669"/>
    <property type="project" value="UniProtKB-KW"/>
</dbReference>
<dbReference type="GO" id="GO:0032263">
    <property type="term" value="P:GMP salvage"/>
    <property type="evidence" value="ECO:0007669"/>
    <property type="project" value="UniProtKB-UniPathway"/>
</dbReference>
<dbReference type="GO" id="GO:0006178">
    <property type="term" value="P:guanine salvage"/>
    <property type="evidence" value="ECO:0007669"/>
    <property type="project" value="TreeGrafter"/>
</dbReference>
<dbReference type="GO" id="GO:0046100">
    <property type="term" value="P:hypoxanthine metabolic process"/>
    <property type="evidence" value="ECO:0007669"/>
    <property type="project" value="TreeGrafter"/>
</dbReference>
<dbReference type="GO" id="GO:0032264">
    <property type="term" value="P:IMP salvage"/>
    <property type="evidence" value="ECO:0007669"/>
    <property type="project" value="UniProtKB-UniPathway"/>
</dbReference>
<dbReference type="GO" id="GO:0006166">
    <property type="term" value="P:purine ribonucleoside salvage"/>
    <property type="evidence" value="ECO:0007669"/>
    <property type="project" value="UniProtKB-KW"/>
</dbReference>
<dbReference type="CDD" id="cd06223">
    <property type="entry name" value="PRTases_typeI"/>
    <property type="match status" value="1"/>
</dbReference>
<dbReference type="FunFam" id="3.40.50.2020:FF:000006">
    <property type="entry name" value="Hypoxanthine phosphoribosyltransferase"/>
    <property type="match status" value="1"/>
</dbReference>
<dbReference type="Gene3D" id="3.40.50.2020">
    <property type="match status" value="1"/>
</dbReference>
<dbReference type="InterPro" id="IPR050408">
    <property type="entry name" value="HGPRT"/>
</dbReference>
<dbReference type="InterPro" id="IPR005904">
    <property type="entry name" value="Hxn_phspho_trans"/>
</dbReference>
<dbReference type="InterPro" id="IPR000836">
    <property type="entry name" value="PRibTrfase_dom"/>
</dbReference>
<dbReference type="InterPro" id="IPR029057">
    <property type="entry name" value="PRTase-like"/>
</dbReference>
<dbReference type="NCBIfam" id="TIGR01203">
    <property type="entry name" value="HGPRTase"/>
    <property type="match status" value="1"/>
</dbReference>
<dbReference type="PANTHER" id="PTHR43340:SF1">
    <property type="entry name" value="HYPOXANTHINE PHOSPHORIBOSYLTRANSFERASE"/>
    <property type="match status" value="1"/>
</dbReference>
<dbReference type="PANTHER" id="PTHR43340">
    <property type="entry name" value="HYPOXANTHINE-GUANINE PHOSPHORIBOSYLTRANSFERASE"/>
    <property type="match status" value="1"/>
</dbReference>
<dbReference type="Pfam" id="PF00156">
    <property type="entry name" value="Pribosyltran"/>
    <property type="match status" value="1"/>
</dbReference>
<dbReference type="SUPFAM" id="SSF53271">
    <property type="entry name" value="PRTase-like"/>
    <property type="match status" value="1"/>
</dbReference>